<name>CIDEA_MOUSE</name>
<protein>
    <recommendedName>
        <fullName evidence="14">Lipid transferase CIDEA</fullName>
    </recommendedName>
    <alternativeName>
        <fullName evidence="13">Cell death activator CIDE-A</fullName>
    </alternativeName>
    <alternativeName>
        <fullName evidence="14">Cell death-inducing DFFA-like effector A</fullName>
    </alternativeName>
</protein>
<sequence>METARDYAGALIRPLTFMGLQTKKVLLTPLIHPARPFRVSNHDRSSRRGVMASSLQELISKTLDVLVITTGLVTLVLEEDGTVVDTEEFFQTLRDNTHFMILEKGQKWTPGSKYVPVCKQPKKSGIARVTFDLYRLNPKDFLGCLNVKATMYEMYSVSYDIRCTSFKAVLRNLLRFMSYAAQMTGQFLVYAGTYMLRVLGDTEEQPSPKPSTKGWFM</sequence>
<comment type="function">
    <text evidence="5 7 8 9 10 11">Lipid transferase that promotes unilocular lipid droplet formation by mediating lipid droplet fusion (PubMed:18509062, PubMed:22144693, PubMed:26609809, PubMed:36477540). Lipid droplet fusion promotes their enlargement, restricting lipolysis and favoring lipid storage (PubMed:18509062, PubMed:22144693, PubMed:26609809). Localizes on the lipid droplet surface, at focal contact sites between lipid droplets, and mediates atypical lipid droplet fusion by promoting directional net neutral lipid transfer from the smaller to larger lipid droplets (PubMed:18509062, PubMed:22144693, PubMed:26609809). The transfer direction may be driven by the internal pressure difference between the contacting lipid droplet pair and occurs at a lower rate than that promoted by CIDEC (PubMed:18509062, PubMed:22144693). May also act as a CEBPB coactivator in epithelial cells to control the expression of a subset of CEBPB downstream target genes, including ID2, IGF1, PRLR, SOCS1, SOCS3, XDH, but not casein (PubMed:22245780). By interacting with CEBPB, strengthens the association of CEBPB with the XDH promoter, increases histone acetylation and dissociates HDAC1 from the promoter (PubMed:22245780). When overexpressed, induces apoptosis; the physiological significance of its role in apoptosis is unclear (PubMed:9564035).</text>
</comment>
<comment type="catalytic activity">
    <reaction evidence="15">
        <text>a triacyl-sn-glycerol(in) = a triacyl-sn-glycerol(out)</text>
        <dbReference type="Rhea" id="RHEA:39011"/>
        <dbReference type="ChEBI" id="CHEBI:64615"/>
    </reaction>
</comment>
<comment type="subunit">
    <text evidence="1 8 9 10">Homodimer (PubMed:26609809). Interacts with CIDEC (By similarity). Directly interacts with CEBPB (PubMed:22245780). Interacts with isoform CLSTN3beta of CLSTN3; inhibiting the lipid transferase activity of CIDEA (PubMed:36477540).</text>
</comment>
<comment type="interaction">
    <interactant intactId="EBI-7927848">
        <id>O70302</id>
    </interactant>
    <interactant intactId="EBI-719769">
        <id>Q9Y478</id>
        <label>PRKAB1</label>
    </interactant>
    <organismsDiffer>true</organismsDiffer>
    <experiments>4</experiments>
</comment>
<comment type="subcellular location">
    <subcellularLocation>
        <location evidence="5 6 7 9">Lipid droplet</location>
    </subcellularLocation>
    <subcellularLocation>
        <location evidence="8">Nucleus</location>
    </subcellularLocation>
    <text evidence="4 5 7 8">Enriched at lipid droplet contact sites (PubMed:18509062, PubMed:22144693). Using a GFP-tagged construct, has been shown to localize to mitochondria, where it could interact with UCP1 and hence inhibit UCP1 uncoupling activity (PubMed:12910269). These data could not be confirmed (PubMed:18509062, PubMed:22245780).</text>
</comment>
<comment type="tissue specificity">
    <text evidence="4 5 8">Highly expressed in brown adipose tissue and, at lower levels, in white adipose tissue (at protein level) (PubMed:12910269, PubMed:18509062). Undetectable in undifferentiated preadipocytes (PubMed:12910269, PubMed:18509062). Expressed in mammary gland during pregnancy and lactation, in epithelial cells, but not in the surrounding adipose tissue (PubMed:22245780). Secreted into milk via milk fat globules (PubMed:22245780).</text>
</comment>
<comment type="developmental stage">
    <text evidence="8">Expressed at 15 dpc in the interscapular region of the embryo, that could correspond to the developing brown adipose tissue. Expression continues in the interscapular region at 18 dpc and postnatally. In mammary glands, begins to be highly expressed at day 14.5 of pregnancy. Expression is maintained at high levels throughout lactation and declines during post-lactational involution.</text>
</comment>
<comment type="induction">
    <text evidence="5">Up-regulated under conditions that enhance triacylglycerol deposition, including rosiglitazone treatment and high-fat diet. This up-regulation is mediated by PPARG.</text>
</comment>
<comment type="domain">
    <text evidence="9">The amphipathic helix mediates embedding into the lipid droplet phospholipid monolayer, promoting phosphatidic acid-binding, thereby facilitating triacylglycerol transfer.</text>
</comment>
<comment type="domain">
    <text evidence="2">The CIDE-N domain is involved in homodimerization which is crucial for its function in promoting lipid exchange and transfer.</text>
</comment>
<comment type="disruption phenotype">
    <text evidence="4 8">Mutant animals appear normal and fertile and produce the expected Mendelian ratio of heterozygous and homozygous descendents. They are lean and resistant to diet-induced obesity and diabetes. They exhibit higher metabolic rate, lipolysis in brown adipose tissue and core body temperature when subjected to cold treatment. Mutant females are unable to properly feed their pups who die within 3 days postpartum due to severely reduced milk lipids.</text>
</comment>
<comment type="similarity">
    <text evidence="14">Belongs to the CIDE family.</text>
</comment>
<keyword id="KW-0010">Activator</keyword>
<keyword id="KW-0053">Apoptosis</keyword>
<keyword id="KW-0551">Lipid droplet</keyword>
<keyword id="KW-0539">Nucleus</keyword>
<keyword id="KW-1185">Reference proteome</keyword>
<keyword id="KW-0804">Transcription</keyword>
<keyword id="KW-0805">Transcription regulation</keyword>
<proteinExistence type="evidence at protein level"/>
<accession>O70302</accession>
<accession>Q4V9X2</accession>
<organism>
    <name type="scientific">Mus musculus</name>
    <name type="common">Mouse</name>
    <dbReference type="NCBI Taxonomy" id="10090"/>
    <lineage>
        <taxon>Eukaryota</taxon>
        <taxon>Metazoa</taxon>
        <taxon>Chordata</taxon>
        <taxon>Craniata</taxon>
        <taxon>Vertebrata</taxon>
        <taxon>Euteleostomi</taxon>
        <taxon>Mammalia</taxon>
        <taxon>Eutheria</taxon>
        <taxon>Euarchontoglires</taxon>
        <taxon>Glires</taxon>
        <taxon>Rodentia</taxon>
        <taxon>Myomorpha</taxon>
        <taxon>Muroidea</taxon>
        <taxon>Muridae</taxon>
        <taxon>Murinae</taxon>
        <taxon>Mus</taxon>
        <taxon>Mus</taxon>
    </lineage>
</organism>
<evidence type="ECO:0000250" key="1">
    <source>
        <dbReference type="UniProtKB" id="O60543"/>
    </source>
</evidence>
<evidence type="ECO:0000250" key="2">
    <source>
        <dbReference type="UniProtKB" id="P56198"/>
    </source>
</evidence>
<evidence type="ECO:0000255" key="3">
    <source>
        <dbReference type="PROSITE-ProRule" id="PRU00447"/>
    </source>
</evidence>
<evidence type="ECO:0000269" key="4">
    <source>
    </source>
</evidence>
<evidence type="ECO:0000269" key="5">
    <source>
    </source>
</evidence>
<evidence type="ECO:0000269" key="6">
    <source>
    </source>
</evidence>
<evidence type="ECO:0000269" key="7">
    <source>
    </source>
</evidence>
<evidence type="ECO:0000269" key="8">
    <source>
    </source>
</evidence>
<evidence type="ECO:0000269" key="9">
    <source>
    </source>
</evidence>
<evidence type="ECO:0000269" key="10">
    <source>
    </source>
</evidence>
<evidence type="ECO:0000269" key="11">
    <source>
    </source>
</evidence>
<evidence type="ECO:0000303" key="12">
    <source>
    </source>
</evidence>
<evidence type="ECO:0000303" key="13">
    <source>
    </source>
</evidence>
<evidence type="ECO:0000305" key="14"/>
<evidence type="ECO:0000305" key="15">
    <source>
    </source>
</evidence>
<evidence type="ECO:0000312" key="16">
    <source>
        <dbReference type="MGI" id="MGI:1270845"/>
    </source>
</evidence>
<dbReference type="EMBL" id="AF041376">
    <property type="protein sequence ID" value="AAC34985.1"/>
    <property type="molecule type" value="mRNA"/>
</dbReference>
<dbReference type="EMBL" id="AC154125">
    <property type="status" value="NOT_ANNOTATED_CDS"/>
    <property type="molecule type" value="Genomic_DNA"/>
</dbReference>
<dbReference type="EMBL" id="CH466528">
    <property type="protein sequence ID" value="EDL09649.1"/>
    <property type="molecule type" value="Genomic_DNA"/>
</dbReference>
<dbReference type="EMBL" id="CH466528">
    <property type="protein sequence ID" value="EDL09650.1"/>
    <property type="molecule type" value="Genomic_DNA"/>
</dbReference>
<dbReference type="EMBL" id="BC096649">
    <property type="protein sequence ID" value="AAH96649.1"/>
    <property type="molecule type" value="mRNA"/>
</dbReference>
<dbReference type="CCDS" id="CCDS37846.1"/>
<dbReference type="RefSeq" id="NP_031728.2">
    <property type="nucleotide sequence ID" value="NM_007702.2"/>
</dbReference>
<dbReference type="BioGRID" id="198712">
    <property type="interactions" value="3"/>
</dbReference>
<dbReference type="FunCoup" id="O70302">
    <property type="interactions" value="607"/>
</dbReference>
<dbReference type="IntAct" id="O70302">
    <property type="interactions" value="7"/>
</dbReference>
<dbReference type="MINT" id="O70302"/>
<dbReference type="STRING" id="10090.ENSMUSP00000025404"/>
<dbReference type="PaxDb" id="10090-ENSMUSP00000025404"/>
<dbReference type="ProteomicsDB" id="279081"/>
<dbReference type="Antibodypedia" id="6758">
    <property type="antibodies" value="305 antibodies from 35 providers"/>
</dbReference>
<dbReference type="DNASU" id="12683"/>
<dbReference type="Ensembl" id="ENSMUST00000025404.10">
    <property type="protein sequence ID" value="ENSMUSP00000025404.9"/>
    <property type="gene ID" value="ENSMUSG00000024526.10"/>
</dbReference>
<dbReference type="GeneID" id="12683"/>
<dbReference type="KEGG" id="mmu:12683"/>
<dbReference type="UCSC" id="uc012beh.1">
    <property type="organism name" value="mouse"/>
</dbReference>
<dbReference type="AGR" id="MGI:1270845"/>
<dbReference type="CTD" id="1149"/>
<dbReference type="MGI" id="MGI:1270845">
    <property type="gene designation" value="Cidea"/>
</dbReference>
<dbReference type="VEuPathDB" id="HostDB:ENSMUSG00000024526"/>
<dbReference type="eggNOG" id="ENOG502RG9M">
    <property type="taxonomic scope" value="Eukaryota"/>
</dbReference>
<dbReference type="GeneTree" id="ENSGT00390000018596"/>
<dbReference type="HOGENOM" id="CLU_090011_2_0_1"/>
<dbReference type="InParanoid" id="O70302"/>
<dbReference type="OMA" id="YDFRCTG"/>
<dbReference type="OrthoDB" id="6475906at2759"/>
<dbReference type="PhylomeDB" id="O70302"/>
<dbReference type="TreeFam" id="TF334321"/>
<dbReference type="Reactome" id="R-MMU-8964572">
    <property type="pathway name" value="Lipid particle organization"/>
</dbReference>
<dbReference type="BioGRID-ORCS" id="12683">
    <property type="hits" value="3 hits in 78 CRISPR screens"/>
</dbReference>
<dbReference type="PRO" id="PR:O70302"/>
<dbReference type="Proteomes" id="UP000000589">
    <property type="component" value="Chromosome 18"/>
</dbReference>
<dbReference type="RNAct" id="O70302">
    <property type="molecule type" value="protein"/>
</dbReference>
<dbReference type="Bgee" id="ENSMUSG00000024526">
    <property type="expression patterns" value="Expressed in aorta tunica adventitia and 121 other cell types or tissues"/>
</dbReference>
<dbReference type="GO" id="GO:0005737">
    <property type="term" value="C:cytoplasm"/>
    <property type="evidence" value="ECO:0000314"/>
    <property type="project" value="BHF-UCL"/>
</dbReference>
<dbReference type="GO" id="GO:0005829">
    <property type="term" value="C:cytosol"/>
    <property type="evidence" value="ECO:0000304"/>
    <property type="project" value="Reactome"/>
</dbReference>
<dbReference type="GO" id="GO:0005811">
    <property type="term" value="C:lipid droplet"/>
    <property type="evidence" value="ECO:0000314"/>
    <property type="project" value="UniProtKB"/>
</dbReference>
<dbReference type="GO" id="GO:0005740">
    <property type="term" value="C:mitochondrial envelope"/>
    <property type="evidence" value="ECO:0000314"/>
    <property type="project" value="MGI"/>
</dbReference>
<dbReference type="GO" id="GO:0005739">
    <property type="term" value="C:mitochondrion"/>
    <property type="evidence" value="ECO:0000314"/>
    <property type="project" value="MGI"/>
</dbReference>
<dbReference type="GO" id="GO:0005634">
    <property type="term" value="C:nucleus"/>
    <property type="evidence" value="ECO:0000314"/>
    <property type="project" value="BHF-UCL"/>
</dbReference>
<dbReference type="GO" id="GO:0120013">
    <property type="term" value="F:lipid transfer activity"/>
    <property type="evidence" value="ECO:0000314"/>
    <property type="project" value="UniProtKB"/>
</dbReference>
<dbReference type="GO" id="GO:0070300">
    <property type="term" value="F:phosphatidic acid binding"/>
    <property type="evidence" value="ECO:0000314"/>
    <property type="project" value="UniProtKB"/>
</dbReference>
<dbReference type="GO" id="GO:0042803">
    <property type="term" value="F:protein homodimerization activity"/>
    <property type="evidence" value="ECO:0000314"/>
    <property type="project" value="BHF-UCL"/>
</dbReference>
<dbReference type="GO" id="GO:0006915">
    <property type="term" value="P:apoptotic process"/>
    <property type="evidence" value="ECO:0007669"/>
    <property type="project" value="UniProtKB-KW"/>
</dbReference>
<dbReference type="GO" id="GO:0070417">
    <property type="term" value="P:cellular response to cold"/>
    <property type="evidence" value="ECO:0000314"/>
    <property type="project" value="MGI"/>
</dbReference>
<dbReference type="GO" id="GO:0045444">
    <property type="term" value="P:fat cell differentiation"/>
    <property type="evidence" value="ECO:0000314"/>
    <property type="project" value="BHF-UCL"/>
</dbReference>
<dbReference type="GO" id="GO:0160077">
    <property type="term" value="P:lipid droplet fusion"/>
    <property type="evidence" value="ECO:0000314"/>
    <property type="project" value="UniProtKB"/>
</dbReference>
<dbReference type="GO" id="GO:0006629">
    <property type="term" value="P:lipid metabolic process"/>
    <property type="evidence" value="ECO:0000315"/>
    <property type="project" value="MGI"/>
</dbReference>
<dbReference type="GO" id="GO:0019915">
    <property type="term" value="P:lipid storage"/>
    <property type="evidence" value="ECO:0000314"/>
    <property type="project" value="UniProtKB"/>
</dbReference>
<dbReference type="GO" id="GO:0120163">
    <property type="term" value="P:negative regulation of cold-induced thermogenesis"/>
    <property type="evidence" value="ECO:0000315"/>
    <property type="project" value="YuBioLab"/>
</dbReference>
<dbReference type="GO" id="GO:1900118">
    <property type="term" value="P:negative regulation of execution phase of apoptosis"/>
    <property type="evidence" value="ECO:0000314"/>
    <property type="project" value="BHF-UCL"/>
</dbReference>
<dbReference type="GO" id="GO:0050995">
    <property type="term" value="P:negative regulation of lipid catabolic process"/>
    <property type="evidence" value="ECO:0000315"/>
    <property type="project" value="BHF-UCL"/>
</dbReference>
<dbReference type="GO" id="GO:0030512">
    <property type="term" value="P:negative regulation of transforming growth factor beta receptor signaling pathway"/>
    <property type="evidence" value="ECO:0000314"/>
    <property type="project" value="BHF-UCL"/>
</dbReference>
<dbReference type="GO" id="GO:0032720">
    <property type="term" value="P:negative regulation of tumor necrosis factor production"/>
    <property type="evidence" value="ECO:0007669"/>
    <property type="project" value="Ensembl"/>
</dbReference>
<dbReference type="GO" id="GO:1902510">
    <property type="term" value="P:regulation of apoptotic DNA fragmentation"/>
    <property type="evidence" value="ECO:0000314"/>
    <property type="project" value="BHF-UCL"/>
</dbReference>
<dbReference type="GO" id="GO:0035634">
    <property type="term" value="P:response to stilbenoid"/>
    <property type="evidence" value="ECO:0000270"/>
    <property type="project" value="UniProtKB"/>
</dbReference>
<dbReference type="GO" id="GO:0001659">
    <property type="term" value="P:temperature homeostasis"/>
    <property type="evidence" value="ECO:0000315"/>
    <property type="project" value="BHF-UCL"/>
</dbReference>
<dbReference type="CDD" id="cd06539">
    <property type="entry name" value="CIDE_N_A"/>
    <property type="match status" value="1"/>
</dbReference>
<dbReference type="FunFam" id="3.10.20.10:FF:000008">
    <property type="entry name" value="Cell death inducing DFFA like effector a"/>
    <property type="match status" value="1"/>
</dbReference>
<dbReference type="Gene3D" id="3.10.20.10">
    <property type="match status" value="1"/>
</dbReference>
<dbReference type="InterPro" id="IPR003508">
    <property type="entry name" value="CIDE-N_dom"/>
</dbReference>
<dbReference type="InterPro" id="IPR032936">
    <property type="entry name" value="CIDEA_N"/>
</dbReference>
<dbReference type="PANTHER" id="PTHR12306">
    <property type="entry name" value="CELL DEATH ACTIVATOR CIDE"/>
    <property type="match status" value="1"/>
</dbReference>
<dbReference type="PANTHER" id="PTHR12306:SF8">
    <property type="entry name" value="LIPID TRANSFERASE CIDEA"/>
    <property type="match status" value="1"/>
</dbReference>
<dbReference type="Pfam" id="PF02017">
    <property type="entry name" value="CIDE-N"/>
    <property type="match status" value="1"/>
</dbReference>
<dbReference type="SMART" id="SM00266">
    <property type="entry name" value="CAD"/>
    <property type="match status" value="1"/>
</dbReference>
<dbReference type="SUPFAM" id="SSF54277">
    <property type="entry name" value="CAD &amp; PB1 domains"/>
    <property type="match status" value="1"/>
</dbReference>
<dbReference type="PROSITE" id="PS51135">
    <property type="entry name" value="CIDE_N"/>
    <property type="match status" value="1"/>
</dbReference>
<gene>
    <name evidence="12 16" type="primary">Cidea</name>
</gene>
<feature type="chain" id="PRO_0000144719" description="Lipid transferase CIDEA">
    <location>
        <begin position="1"/>
        <end position="217"/>
    </location>
</feature>
<feature type="domain" description="CIDE-N" evidence="3">
    <location>
        <begin position="33"/>
        <end position="110"/>
    </location>
</feature>
<feature type="region of interest" description="Amphipathic helix" evidence="9">
    <location>
        <begin position="163"/>
        <end position="180"/>
    </location>
</feature>
<feature type="mutagenesis site" description="Substantial reduction in nuclear localization and loss of XDH induction; when associated with A-24." evidence="8">
    <original>K</original>
    <variation>A</variation>
    <location>
        <position position="23"/>
    </location>
</feature>
<feature type="mutagenesis site" description="Increased nuclear localization." evidence="8">
    <original>K</original>
    <variation>R</variation>
    <location>
        <position position="23"/>
    </location>
</feature>
<feature type="mutagenesis site" description="Substantial reduction in nuclear localization and loss of XDH induction; when associated with A-23." evidence="8">
    <original>K</original>
    <variation>A</variation>
    <location>
        <position position="24"/>
    </location>
</feature>
<feature type="mutagenesis site" description="Abolished localization to lipid droplets." evidence="9">
    <original>FKAVL</original>
    <variation>RAVRR</variation>
    <location>
        <begin position="166"/>
        <end position="170"/>
    </location>
</feature>
<feature type="mutagenesis site" description="Abolished localization to lipid droplets." evidence="9">
    <original>FKAV</original>
    <variation>RKRR</variation>
    <location>
        <begin position="166"/>
        <end position="169"/>
    </location>
</feature>
<feature type="mutagenesis site" description="Does not affect localization to lipid droplets but prevents lipid droplet fusion." evidence="9">
    <original>KAVLRNLLR</original>
    <variation>EAVLENLLE</variation>
    <location>
        <begin position="167"/>
        <end position="175"/>
    </location>
</feature>
<feature type="mutagenesis site" description="Does not affect localization to lipid droplets or ability to mediate lipid droplet fusion." evidence="9">
    <original>KAVLRNLLR</original>
    <variation>HAVLHNLLH</variation>
    <location>
        <begin position="167"/>
        <end position="175"/>
    </location>
</feature>
<feature type="mutagenesis site" description="Abolished lipid transferase activity." evidence="9">
    <original>RNLLR</original>
    <variation>ANLLA</variation>
    <location>
        <begin position="171"/>
        <end position="175"/>
    </location>
</feature>
<feature type="sequence conflict" description="In Ref. 1; AAC34985." evidence="14" ref="1">
    <original>S</original>
    <variation>R</variation>
    <location>
        <position position="165"/>
    </location>
</feature>
<reference key="1">
    <citation type="journal article" date="1998" name="EMBO J.">
        <title>CIDE, a novel family of cell death activators with homology to the 45 kDa subunit of the DNA fragmentation factor.</title>
        <authorList>
            <person name="Inohara N."/>
            <person name="Koseki T."/>
            <person name="Chen S."/>
            <person name="Wu X."/>
            <person name="Nunez G."/>
        </authorList>
    </citation>
    <scope>NUCLEOTIDE SEQUENCE [MRNA]</scope>
    <scope>FUNCTION IN APOPTOSIS</scope>
</reference>
<reference key="2">
    <citation type="journal article" date="2009" name="PLoS Biol.">
        <title>Lineage-specific biology revealed by a finished genome assembly of the mouse.</title>
        <authorList>
            <person name="Church D.M."/>
            <person name="Goodstadt L."/>
            <person name="Hillier L.W."/>
            <person name="Zody M.C."/>
            <person name="Goldstein S."/>
            <person name="She X."/>
            <person name="Bult C.J."/>
            <person name="Agarwala R."/>
            <person name="Cherry J.L."/>
            <person name="DiCuccio M."/>
            <person name="Hlavina W."/>
            <person name="Kapustin Y."/>
            <person name="Meric P."/>
            <person name="Maglott D."/>
            <person name="Birtle Z."/>
            <person name="Marques A.C."/>
            <person name="Graves T."/>
            <person name="Zhou S."/>
            <person name="Teague B."/>
            <person name="Potamousis K."/>
            <person name="Churas C."/>
            <person name="Place M."/>
            <person name="Herschleb J."/>
            <person name="Runnheim R."/>
            <person name="Forrest D."/>
            <person name="Amos-Landgraf J."/>
            <person name="Schwartz D.C."/>
            <person name="Cheng Z."/>
            <person name="Lindblad-Toh K."/>
            <person name="Eichler E.E."/>
            <person name="Ponting C.P."/>
        </authorList>
    </citation>
    <scope>NUCLEOTIDE SEQUENCE [LARGE SCALE GENOMIC DNA]</scope>
    <source>
        <strain>C57BL/6J</strain>
    </source>
</reference>
<reference key="3">
    <citation type="submission" date="2005-07" db="EMBL/GenBank/DDBJ databases">
        <authorList>
            <person name="Mural R.J."/>
            <person name="Adams M.D."/>
            <person name="Myers E.W."/>
            <person name="Smith H.O."/>
            <person name="Venter J.C."/>
        </authorList>
    </citation>
    <scope>NUCLEOTIDE SEQUENCE [LARGE SCALE GENOMIC DNA]</scope>
</reference>
<reference key="4">
    <citation type="journal article" date="2004" name="Genome Res.">
        <title>The status, quality, and expansion of the NIH full-length cDNA project: the Mammalian Gene Collection (MGC).</title>
        <authorList>
            <consortium name="The MGC Project Team"/>
        </authorList>
    </citation>
    <scope>NUCLEOTIDE SEQUENCE [LARGE SCALE MRNA]</scope>
    <source>
        <strain>C57BL/6J</strain>
        <tissue>Mammary gland</tissue>
    </source>
</reference>
<reference key="5">
    <citation type="journal article" date="2003" name="Nat. Genet.">
        <title>Cidea-deficient mice have lean phenotype and are resistant to obesity.</title>
        <authorList>
            <person name="Zhou Z."/>
            <person name="Yon Toh S."/>
            <person name="Chen Z."/>
            <person name="Guo K."/>
            <person name="Ng C.P."/>
            <person name="Ponniah S."/>
            <person name="Lin S.C."/>
            <person name="Hong W."/>
            <person name="Li P."/>
        </authorList>
    </citation>
    <scope>SUBCELLULAR LOCATION</scope>
    <scope>TISSUE SPECIFICITY</scope>
    <scope>DISRUPTION PHENOTYPE</scope>
</reference>
<reference key="6">
    <citation type="journal article" date="2008" name="Proc. Natl. Acad. Sci. U.S.A.">
        <title>Cidea is associated with lipid droplets and insulin sensitivity in humans.</title>
        <authorList>
            <person name="Puri V."/>
            <person name="Ranjit S."/>
            <person name="Konda S."/>
            <person name="Nicoloro S.M."/>
            <person name="Straubhaar J."/>
            <person name="Chawla A."/>
            <person name="Chouinard M."/>
            <person name="Lin C."/>
            <person name="Burkart A."/>
            <person name="Corvera S."/>
            <person name="Perugini R.A."/>
            <person name="Czech M.P."/>
        </authorList>
    </citation>
    <scope>FUNCTION</scope>
    <scope>INDUCTION</scope>
    <scope>SUBCELLULAR LOCATION</scope>
    <scope>TISSUE SPECIFICITY</scope>
</reference>
<reference key="7">
    <citation type="journal article" date="2010" name="J. Lipid Res.">
        <title>Identification of the lipid droplet targeting domain of the Cidea protein.</title>
        <authorList>
            <person name="Christianson J.L."/>
            <person name="Boutet E."/>
            <person name="Puri V."/>
            <person name="Chawla A."/>
            <person name="Czech M.P."/>
        </authorList>
    </citation>
    <scope>SUBCELLULAR LOCATION</scope>
</reference>
<reference key="8">
    <citation type="journal article" date="2011" name="J. Cell Biol.">
        <title>Fsp27 promotes lipid droplet growth by lipid exchange and transfer at lipid droplet contact sites.</title>
        <authorList>
            <person name="Gong J."/>
            <person name="Sun Z."/>
            <person name="Wu L."/>
            <person name="Xu W."/>
            <person name="Schieber N."/>
            <person name="Xu D."/>
            <person name="Shui G."/>
            <person name="Yang H."/>
            <person name="Parton R.G."/>
            <person name="Li P."/>
        </authorList>
    </citation>
    <scope>FUNCTION</scope>
    <scope>SUBCELLULAR LOCATION</scope>
</reference>
<reference key="9">
    <citation type="journal article" date="2012" name="Nat. Med.">
        <title>Cidea is an essential transcriptional coactivator regulating mammary gland secretion of milk lipids.</title>
        <authorList>
            <person name="Wang W."/>
            <person name="Lv N."/>
            <person name="Zhang S."/>
            <person name="Shui G."/>
            <person name="Qian H."/>
            <person name="Zhang J."/>
            <person name="Chen Y."/>
            <person name="Ye J."/>
            <person name="Xie Y."/>
            <person name="Shen Y."/>
            <person name="Wenk M.R."/>
            <person name="Li P."/>
        </authorList>
    </citation>
    <scope>FUNCTION AS A CEBPB COACTIVATOR</scope>
    <scope>INTERACTION WITH CEBPB</scope>
    <scope>SUBCELLULAR LOCATION</scope>
    <scope>TISSUE SPECIFICITY</scope>
    <scope>DEVELOPMENTAL STAGE</scope>
    <scope>DISRUPTION PHENOTYPE</scope>
    <scope>MUTAGENESIS OF LYS-23 AND LYS-24</scope>
</reference>
<reference key="10">
    <citation type="journal article" date="2015" name="Elife">
        <title>The brown adipocyte protein CIDEA promotes lipid droplet fusion via a phosphatidic acid-binding amphipathic helix.</title>
        <authorList>
            <person name="Barneda D."/>
            <person name="Planas-Iglesias J."/>
            <person name="Gaspar M.L."/>
            <person name="Mohammadyani D."/>
            <person name="Prasannan S."/>
            <person name="Dormann D."/>
            <person name="Han G.S."/>
            <person name="Jesch S.A."/>
            <person name="Carman G.M."/>
            <person name="Kagan V."/>
            <person name="Parker M.G."/>
            <person name="Ktistakis N.T."/>
            <person name="Klein-Seetharaman J."/>
            <person name="Dixon A.M."/>
            <person name="Henry S.A."/>
            <person name="Christian M."/>
        </authorList>
    </citation>
    <scope>FUNCTION</scope>
    <scope>TRANSPORTER ACTIVITY</scope>
    <scope>SUBCELLULAR LOCATION</scope>
    <scope>SUBUNIT</scope>
    <scope>DOMAIN</scope>
    <scope>MUTAGENESIS OF 166-PHE--LEU-170; 166-PHE--VAL-169; 167-LYS--ARG-175 AND 171-ARG--ARG-175</scope>
</reference>
<reference key="11">
    <citation type="journal article" date="2016" name="J. Biol. Chem.">
        <title>Differential roles of cell death-inducing DNA fragmentation factor-alpha-like effector (CIDE) proteins in promoting lipid droplet fusion and growth in subpopulations of hepatocytes.</title>
        <authorList>
            <person name="Xu W."/>
            <person name="Wu L."/>
            <person name="Yu M."/>
            <person name="Chen F.J."/>
            <person name="Arshad M."/>
            <person name="Xia X."/>
            <person name="Ren H."/>
            <person name="Yu J."/>
            <person name="Xu L."/>
            <person name="Xu D."/>
            <person name="Li J.Z."/>
            <person name="Li P."/>
            <person name="Zhou L."/>
        </authorList>
    </citation>
    <scope>FUNCTION</scope>
    <scope>SUBCELLULAR LOCATION</scope>
</reference>
<reference key="12">
    <citation type="journal article" date="2022" name="Nature">
        <title>CLSTN3beta enforces adipocyte multilocularity to facilitate lipid utilization.</title>
        <authorList>
            <person name="Qian K."/>
            <person name="Tol M.J."/>
            <person name="Wu J."/>
            <person name="Uchiyama L.F."/>
            <person name="Xiao X."/>
            <person name="Cui L."/>
            <person name="Bedard A.H."/>
            <person name="Weston T.A."/>
            <person name="Rajendran P.S."/>
            <person name="Vergnes L."/>
            <person name="Shimanaka Y."/>
            <person name="Yin Y."/>
            <person name="Jami-Alahmadi Y."/>
            <person name="Cohn W."/>
            <person name="Bajar B.T."/>
            <person name="Lin C.H."/>
            <person name="Jin B."/>
            <person name="DeNardo L.A."/>
            <person name="Black D.L."/>
            <person name="Whitelegge J.P."/>
            <person name="Wohlschlegel J.A."/>
            <person name="Reue K."/>
            <person name="Shivkumar K."/>
            <person name="Chen F.J."/>
            <person name="Young S.G."/>
            <person name="Li P."/>
            <person name="Tontonoz P."/>
        </authorList>
    </citation>
    <scope>FUNCTION</scope>
    <scope>INTERACTION WITH CLSTN3BETA OF CLSTN3</scope>
</reference>